<reference key="1">
    <citation type="journal article" date="1998" name="Microbiology">
        <title>A 28 kbp segment from the spoVM region of the Bacillus subtilis 168 genome.</title>
        <authorList>
            <person name="Foulger D."/>
            <person name="Errington J."/>
        </authorList>
    </citation>
    <scope>NUCLEOTIDE SEQUENCE [GENOMIC DNA]</scope>
    <source>
        <strain>168</strain>
    </source>
</reference>
<reference key="2">
    <citation type="journal article" date="1997" name="Nature">
        <title>The complete genome sequence of the Gram-positive bacterium Bacillus subtilis.</title>
        <authorList>
            <person name="Kunst F."/>
            <person name="Ogasawara N."/>
            <person name="Moszer I."/>
            <person name="Albertini A.M."/>
            <person name="Alloni G."/>
            <person name="Azevedo V."/>
            <person name="Bertero M.G."/>
            <person name="Bessieres P."/>
            <person name="Bolotin A."/>
            <person name="Borchert S."/>
            <person name="Borriss R."/>
            <person name="Boursier L."/>
            <person name="Brans A."/>
            <person name="Braun M."/>
            <person name="Brignell S.C."/>
            <person name="Bron S."/>
            <person name="Brouillet S."/>
            <person name="Bruschi C.V."/>
            <person name="Caldwell B."/>
            <person name="Capuano V."/>
            <person name="Carter N.M."/>
            <person name="Choi S.-K."/>
            <person name="Codani J.-J."/>
            <person name="Connerton I.F."/>
            <person name="Cummings N.J."/>
            <person name="Daniel R.A."/>
            <person name="Denizot F."/>
            <person name="Devine K.M."/>
            <person name="Duesterhoeft A."/>
            <person name="Ehrlich S.D."/>
            <person name="Emmerson P.T."/>
            <person name="Entian K.-D."/>
            <person name="Errington J."/>
            <person name="Fabret C."/>
            <person name="Ferrari E."/>
            <person name="Foulger D."/>
            <person name="Fritz C."/>
            <person name="Fujita M."/>
            <person name="Fujita Y."/>
            <person name="Fuma S."/>
            <person name="Galizzi A."/>
            <person name="Galleron N."/>
            <person name="Ghim S.-Y."/>
            <person name="Glaser P."/>
            <person name="Goffeau A."/>
            <person name="Golightly E.J."/>
            <person name="Grandi G."/>
            <person name="Guiseppi G."/>
            <person name="Guy B.J."/>
            <person name="Haga K."/>
            <person name="Haiech J."/>
            <person name="Harwood C.R."/>
            <person name="Henaut A."/>
            <person name="Hilbert H."/>
            <person name="Holsappel S."/>
            <person name="Hosono S."/>
            <person name="Hullo M.-F."/>
            <person name="Itaya M."/>
            <person name="Jones L.-M."/>
            <person name="Joris B."/>
            <person name="Karamata D."/>
            <person name="Kasahara Y."/>
            <person name="Klaerr-Blanchard M."/>
            <person name="Klein C."/>
            <person name="Kobayashi Y."/>
            <person name="Koetter P."/>
            <person name="Koningstein G."/>
            <person name="Krogh S."/>
            <person name="Kumano M."/>
            <person name="Kurita K."/>
            <person name="Lapidus A."/>
            <person name="Lardinois S."/>
            <person name="Lauber J."/>
            <person name="Lazarevic V."/>
            <person name="Lee S.-M."/>
            <person name="Levine A."/>
            <person name="Liu H."/>
            <person name="Masuda S."/>
            <person name="Mauel C."/>
            <person name="Medigue C."/>
            <person name="Medina N."/>
            <person name="Mellado R.P."/>
            <person name="Mizuno M."/>
            <person name="Moestl D."/>
            <person name="Nakai S."/>
            <person name="Noback M."/>
            <person name="Noone D."/>
            <person name="O'Reilly M."/>
            <person name="Ogawa K."/>
            <person name="Ogiwara A."/>
            <person name="Oudega B."/>
            <person name="Park S.-H."/>
            <person name="Parro V."/>
            <person name="Pohl T.M."/>
            <person name="Portetelle D."/>
            <person name="Porwollik S."/>
            <person name="Prescott A.M."/>
            <person name="Presecan E."/>
            <person name="Pujic P."/>
            <person name="Purnelle B."/>
            <person name="Rapoport G."/>
            <person name="Rey M."/>
            <person name="Reynolds S."/>
            <person name="Rieger M."/>
            <person name="Rivolta C."/>
            <person name="Rocha E."/>
            <person name="Roche B."/>
            <person name="Rose M."/>
            <person name="Sadaie Y."/>
            <person name="Sato T."/>
            <person name="Scanlan E."/>
            <person name="Schleich S."/>
            <person name="Schroeter R."/>
            <person name="Scoffone F."/>
            <person name="Sekiguchi J."/>
            <person name="Sekowska A."/>
            <person name="Seror S.J."/>
            <person name="Serror P."/>
            <person name="Shin B.-S."/>
            <person name="Soldo B."/>
            <person name="Sorokin A."/>
            <person name="Tacconi E."/>
            <person name="Takagi T."/>
            <person name="Takahashi H."/>
            <person name="Takemaru K."/>
            <person name="Takeuchi M."/>
            <person name="Tamakoshi A."/>
            <person name="Tanaka T."/>
            <person name="Terpstra P."/>
            <person name="Tognoni A."/>
            <person name="Tosato V."/>
            <person name="Uchiyama S."/>
            <person name="Vandenbol M."/>
            <person name="Vannier F."/>
            <person name="Vassarotti A."/>
            <person name="Viari A."/>
            <person name="Wambutt R."/>
            <person name="Wedler E."/>
            <person name="Wedler H."/>
            <person name="Weitzenegger T."/>
            <person name="Winters P."/>
            <person name="Wipat A."/>
            <person name="Yamamoto H."/>
            <person name="Yamane K."/>
            <person name="Yasumoto K."/>
            <person name="Yata K."/>
            <person name="Yoshida K."/>
            <person name="Yoshikawa H.-F."/>
            <person name="Zumstein E."/>
            <person name="Yoshikawa H."/>
            <person name="Danchin A."/>
        </authorList>
    </citation>
    <scope>NUCLEOTIDE SEQUENCE [LARGE SCALE GENOMIC DNA]</scope>
    <source>
        <strain>168</strain>
    </source>
</reference>
<reference key="3">
    <citation type="journal article" date="2022" name="RNA">
        <title>Discovery and initial characterization of YloC, a novel endoribonuclease in Bacillus subtilis.</title>
        <authorList>
            <person name="Ingle S."/>
            <person name="Chhabra S."/>
            <person name="Chen J."/>
            <person name="Lazarus M.B."/>
            <person name="Luo X."/>
            <person name="Bechhofer D.H."/>
        </authorList>
    </citation>
    <scope>FUNCTION AS AN ENDORIBONUCLEASE</scope>
    <scope>COFACTOR</scope>
    <scope>SUBUNIT</scope>
    <scope>DISRUPTION PHENOTYPE</scope>
    <scope>MUTAGENESIS OF HIS-228; GLU-256 AND ASN-258</scope>
    <source>
        <strain>BG1</strain>
    </source>
</reference>
<feature type="chain" id="PRO_0000360003" description="Endoribonuclease YloC">
    <location>
        <begin position="1"/>
        <end position="291"/>
    </location>
</feature>
<feature type="mutagenesis site" description="Dramatically reduced endoribonuclease activity (0.26% of wild-type)." evidence="1">
    <original>H</original>
    <variation>A</variation>
    <location>
        <position position="228"/>
    </location>
</feature>
<feature type="mutagenesis site" description="Dramatically reduced endoribonuclease activity (0.22% of wild-type)." evidence="1">
    <original>E</original>
    <variation>A</variation>
    <location>
        <position position="256"/>
    </location>
</feature>
<feature type="mutagenesis site" description="Reduced endoribonuclease activity (11.1% of wild-type)." evidence="1">
    <original>N</original>
    <variation>A</variation>
    <location>
        <position position="258"/>
    </location>
</feature>
<sequence>MIRSMTGFGSASKTQDDLSVSVELKSVNYRFKEVNARLPRPLLYFEDKLKQTILQHIQRGRIELFVSVDSDMLVEKRLEIDWPLLDEFVAAARDMKKRYQLSAEPDVMDFFKLDHVVQVHEEQTQNDKLEALIIDAAEEAVKGLCEMREKEGLLLAKDCLMHIDQLEELVRETELLAADVVSRYRERLYARIKEWTEDVLDESRLVTECAIFADRSDITEEITRLKSHFAQFRDILASGGAVGRKLDFLVQELNREANTIGSKANDHQITKLVVEMKSSIEKIKEQVQNIE</sequence>
<name>YLOC_BACSU</name>
<gene>
    <name type="primary">yloC</name>
    <name type="ordered locus">BSU15660</name>
</gene>
<keyword id="KW-0255">Endonuclease</keyword>
<keyword id="KW-0378">Hydrolase</keyword>
<keyword id="KW-0540">Nuclease</keyword>
<keyword id="KW-1185">Reference proteome</keyword>
<accession>O34441</accession>
<accession>Q799L1</accession>
<evidence type="ECO:0000269" key="1">
    <source>
    </source>
</evidence>
<evidence type="ECO:0000303" key="2">
    <source>
    </source>
</evidence>
<evidence type="ECO:0000305" key="3"/>
<evidence type="ECO:0000305" key="4">
    <source>
    </source>
</evidence>
<organism>
    <name type="scientific">Bacillus subtilis (strain 168)</name>
    <dbReference type="NCBI Taxonomy" id="224308"/>
    <lineage>
        <taxon>Bacteria</taxon>
        <taxon>Bacillati</taxon>
        <taxon>Bacillota</taxon>
        <taxon>Bacilli</taxon>
        <taxon>Bacillales</taxon>
        <taxon>Bacillaceae</taxon>
        <taxon>Bacillus</taxon>
    </lineage>
</organism>
<comment type="function">
    <text evidence="1">Endonucleolytically cleaves ssRNA generating a 3'-OH and (presumably) a 5'-phosphate group. Cleaves preferentially at U residues, has no activity on dsRNA or dsDNA. Upon expression in E.coli contributes to the degradation of small RNA (sRNA) RhyB.</text>
</comment>
<comment type="cofactor">
    <cofactor evidence="1">
        <name>a divalent metal cation</name>
        <dbReference type="ChEBI" id="CHEBI:60240"/>
    </cofactor>
    <text evidence="1">Mn(2+) gives highest endonuclease activity in vitro, followed by Mg(2+) and to a lesser extent by Co(2+).</text>
</comment>
<comment type="subunit">
    <text evidence="1 4">Oligomerizes, perhaps as a hexamer (PubMed:34815358). Might interact with PNPase (pnp) in E.coli (Probable) (PubMed:34815358).</text>
</comment>
<comment type="disruption phenotype">
    <text evidence="1">No visible phenotype, no effect on sporulation. A quintuple ribonuclease deletion mutant (pnp, rph, rnr, yhaM, yloC) is viable.</text>
</comment>
<comment type="similarity">
    <text evidence="3">Belongs to the YicC/YloC family.</text>
</comment>
<proteinExistence type="evidence at protein level"/>
<dbReference type="EC" id="3.1.26.-" evidence="1"/>
<dbReference type="EMBL" id="Y13937">
    <property type="protein sequence ID" value="CAA74270.1"/>
    <property type="molecule type" value="Genomic_DNA"/>
</dbReference>
<dbReference type="EMBL" id="AL009126">
    <property type="protein sequence ID" value="CAB13440.1"/>
    <property type="molecule type" value="Genomic_DNA"/>
</dbReference>
<dbReference type="PIR" id="A69878">
    <property type="entry name" value="A69878"/>
</dbReference>
<dbReference type="RefSeq" id="NP_389449.1">
    <property type="nucleotide sequence ID" value="NC_000964.3"/>
</dbReference>
<dbReference type="RefSeq" id="WP_009967215.1">
    <property type="nucleotide sequence ID" value="NZ_OZ025638.1"/>
</dbReference>
<dbReference type="SMR" id="O34441"/>
<dbReference type="FunCoup" id="O34441">
    <property type="interactions" value="129"/>
</dbReference>
<dbReference type="IntAct" id="O34441">
    <property type="interactions" value="1"/>
</dbReference>
<dbReference type="STRING" id="224308.BSU15660"/>
<dbReference type="PaxDb" id="224308-BSU15660"/>
<dbReference type="EnsemblBacteria" id="CAB13440">
    <property type="protein sequence ID" value="CAB13440"/>
    <property type="gene ID" value="BSU_15660"/>
</dbReference>
<dbReference type="GeneID" id="936454"/>
<dbReference type="KEGG" id="bsu:BSU15660"/>
<dbReference type="PATRIC" id="fig|224308.179.peg.1706"/>
<dbReference type="eggNOG" id="COG1561">
    <property type="taxonomic scope" value="Bacteria"/>
</dbReference>
<dbReference type="InParanoid" id="O34441"/>
<dbReference type="OrthoDB" id="9771229at2"/>
<dbReference type="PhylomeDB" id="O34441"/>
<dbReference type="BioCyc" id="BSUB:BSU15660-MONOMER"/>
<dbReference type="Proteomes" id="UP000001570">
    <property type="component" value="Chromosome"/>
</dbReference>
<dbReference type="GO" id="GO:0016891">
    <property type="term" value="F:RNA endonuclease activity, producing 5'-phosphomonoesters"/>
    <property type="evidence" value="ECO:0000314"/>
    <property type="project" value="UniProtKB"/>
</dbReference>
<dbReference type="GO" id="GO:0006401">
    <property type="term" value="P:RNA catabolic process"/>
    <property type="evidence" value="ECO:0000318"/>
    <property type="project" value="GO_Central"/>
</dbReference>
<dbReference type="InterPro" id="IPR013551">
    <property type="entry name" value="YicC-like_C"/>
</dbReference>
<dbReference type="InterPro" id="IPR013527">
    <property type="entry name" value="YicC-like_N"/>
</dbReference>
<dbReference type="InterPro" id="IPR005229">
    <property type="entry name" value="YicC/YloC-like"/>
</dbReference>
<dbReference type="NCBIfam" id="TIGR00255">
    <property type="entry name" value="YicC/YloC family endoribonuclease"/>
    <property type="match status" value="1"/>
</dbReference>
<dbReference type="PANTHER" id="PTHR30636">
    <property type="entry name" value="UPF0701 PROTEIN YICC"/>
    <property type="match status" value="1"/>
</dbReference>
<dbReference type="PANTHER" id="PTHR30636:SF3">
    <property type="entry name" value="UPF0701 PROTEIN YICC"/>
    <property type="match status" value="1"/>
</dbReference>
<dbReference type="Pfam" id="PF08340">
    <property type="entry name" value="YicC-like_C"/>
    <property type="match status" value="1"/>
</dbReference>
<dbReference type="Pfam" id="PF03755">
    <property type="entry name" value="YicC-like_N"/>
    <property type="match status" value="1"/>
</dbReference>
<protein>
    <recommendedName>
        <fullName evidence="2">Endoribonuclease YloC</fullName>
        <ecNumber evidence="1">3.1.26.-</ecNumber>
    </recommendedName>
</protein>